<proteinExistence type="inferred from homology"/>
<gene>
    <name type="primary">nop7</name>
    <name type="ORF">SS1G_04356</name>
</gene>
<dbReference type="EMBL" id="CH476625">
    <property type="protein sequence ID" value="EDO01881.1"/>
    <property type="molecule type" value="Genomic_DNA"/>
</dbReference>
<dbReference type="RefSeq" id="XP_001594549.1">
    <property type="nucleotide sequence ID" value="XM_001594499.1"/>
</dbReference>
<dbReference type="SMR" id="A7EGB5"/>
<dbReference type="FunCoup" id="A7EGB5">
    <property type="interactions" value="1214"/>
</dbReference>
<dbReference type="STRING" id="665079.A7EGB5"/>
<dbReference type="EnsemblFungi" id="EDO01881">
    <property type="protein sequence ID" value="EDO01881"/>
    <property type="gene ID" value="SS1G_04356"/>
</dbReference>
<dbReference type="GeneID" id="5490716"/>
<dbReference type="KEGG" id="ssl:SS1G_04356"/>
<dbReference type="VEuPathDB" id="FungiDB:sscle_02g017380"/>
<dbReference type="eggNOG" id="KOG2481">
    <property type="taxonomic scope" value="Eukaryota"/>
</dbReference>
<dbReference type="HOGENOM" id="CLU_019619_1_1_1"/>
<dbReference type="InParanoid" id="A7EGB5"/>
<dbReference type="OMA" id="QKVTWIV"/>
<dbReference type="OrthoDB" id="10264910at2759"/>
<dbReference type="Proteomes" id="UP000001312">
    <property type="component" value="Unassembled WGS sequence"/>
</dbReference>
<dbReference type="GO" id="GO:0005654">
    <property type="term" value="C:nucleoplasm"/>
    <property type="evidence" value="ECO:0007669"/>
    <property type="project" value="UniProtKB-SubCell"/>
</dbReference>
<dbReference type="GO" id="GO:0070545">
    <property type="term" value="C:PeBoW complex"/>
    <property type="evidence" value="ECO:0000318"/>
    <property type="project" value="GO_Central"/>
</dbReference>
<dbReference type="GO" id="GO:0030687">
    <property type="term" value="C:preribosome, large subunit precursor"/>
    <property type="evidence" value="ECO:0007669"/>
    <property type="project" value="UniProtKB-UniRule"/>
</dbReference>
<dbReference type="GO" id="GO:0043021">
    <property type="term" value="F:ribonucleoprotein complex binding"/>
    <property type="evidence" value="ECO:0007669"/>
    <property type="project" value="UniProtKB-UniRule"/>
</dbReference>
<dbReference type="GO" id="GO:0003723">
    <property type="term" value="F:RNA binding"/>
    <property type="evidence" value="ECO:0000318"/>
    <property type="project" value="GO_Central"/>
</dbReference>
<dbReference type="GO" id="GO:0000466">
    <property type="term" value="P:maturation of 5.8S rRNA from tricistronic rRNA transcript (SSU-rRNA, 5.8S rRNA, LSU-rRNA)"/>
    <property type="evidence" value="ECO:0007669"/>
    <property type="project" value="UniProtKB-UniRule"/>
</dbReference>
<dbReference type="GO" id="GO:0000463">
    <property type="term" value="P:maturation of LSU-rRNA from tricistronic rRNA transcript (SSU-rRNA, 5.8S rRNA, LSU-rRNA)"/>
    <property type="evidence" value="ECO:0000318"/>
    <property type="project" value="GO_Central"/>
</dbReference>
<dbReference type="CDD" id="cd17709">
    <property type="entry name" value="BRCT_pescadillo_like"/>
    <property type="match status" value="1"/>
</dbReference>
<dbReference type="FunFam" id="3.40.50.10190:FF:000056">
    <property type="entry name" value="Pescadillo homolog"/>
    <property type="match status" value="1"/>
</dbReference>
<dbReference type="Gene3D" id="3.40.50.10190">
    <property type="entry name" value="BRCT domain"/>
    <property type="match status" value="1"/>
</dbReference>
<dbReference type="HAMAP" id="MF_03028">
    <property type="entry name" value="Pescadillo"/>
    <property type="match status" value="1"/>
</dbReference>
<dbReference type="InterPro" id="IPR001357">
    <property type="entry name" value="BRCT_dom"/>
</dbReference>
<dbReference type="InterPro" id="IPR036420">
    <property type="entry name" value="BRCT_dom_sf"/>
</dbReference>
<dbReference type="InterPro" id="IPR010613">
    <property type="entry name" value="PES"/>
</dbReference>
<dbReference type="PANTHER" id="PTHR12221">
    <property type="entry name" value="PESCADILLO - RELATED"/>
    <property type="match status" value="1"/>
</dbReference>
<dbReference type="PANTHER" id="PTHR12221:SF6">
    <property type="entry name" value="PESCADILLO HOMOLOG"/>
    <property type="match status" value="1"/>
</dbReference>
<dbReference type="Pfam" id="PF00533">
    <property type="entry name" value="BRCT"/>
    <property type="match status" value="1"/>
</dbReference>
<dbReference type="Pfam" id="PF06732">
    <property type="entry name" value="Pescadillo_N"/>
    <property type="match status" value="1"/>
</dbReference>
<dbReference type="SUPFAM" id="SSF52113">
    <property type="entry name" value="BRCT domain"/>
    <property type="match status" value="1"/>
</dbReference>
<dbReference type="PROSITE" id="PS50172">
    <property type="entry name" value="BRCT"/>
    <property type="match status" value="1"/>
</dbReference>
<name>PESC_SCLS1</name>
<sequence>MGRIKKKGTAGQAKNFITRTQAVRKLQISLPDFRKLCIWKGIYPREPRNKKKASKSSTHSTTFYYTKDIQWLLHEKIVDAFREQKALEKKISKALGRGDAHDAARLERNASRPEKTGKTKYNLDHIIRERYPTFIDALRDLDDCLSMLFLFANLPSTSTVPAKMIARCEKLCLEFEHYLIVSNSLRKSFLSIKGIYYQATIQGQDILWLVPYRFNQRVTGDVDFRIMGTFVEFYQTLLGFVNFRLYTSVGLVYPPKFDKARDDQDAGLGAFSLEGNGIGAIEQPKQITNGDASKPDPKLQAEIDKLMLQLNAPEKEAEETSKTSPDGEEEEQATETIDKFEPAAPGGDILMQPSYSATDPSTLFSKFTFFLSRETPRQSLEFILRAFGCKRIGWDAVLGEGAFTHNESDPSITHQVVDRPPMQVQPEEEEEIKEDNQTAQRLRPGARIPGRIYIQPQWIWDCINDEELKRPDLYAPGAQLPPHLSPFVKKVRGQYDPSAPLQDQEREDEELEMDSGSEDEADVSDDETAVKKQDPLTAMDVDETAEGMDVAGSDDESDEAPEKADESFGGFSEAEESEDEGETAALRRQRELEAELSGVALQEKEVDPRVKAKTDAKKKAAKKAKEEDEELERSKMMMSRKKRKILEKMVYSNKKKDAEAEALRAKRRKIEKSGKAAPRE</sequence>
<feature type="chain" id="PRO_0000370503" description="Pescadillo homolog">
    <location>
        <begin position="1"/>
        <end position="680"/>
    </location>
</feature>
<feature type="domain" description="BRCT" evidence="1">
    <location>
        <begin position="359"/>
        <end position="476"/>
    </location>
</feature>
<feature type="region of interest" description="Disordered" evidence="2">
    <location>
        <begin position="312"/>
        <end position="351"/>
    </location>
</feature>
<feature type="region of interest" description="Disordered" evidence="2">
    <location>
        <begin position="494"/>
        <end position="642"/>
    </location>
</feature>
<feature type="region of interest" description="Disordered" evidence="2">
    <location>
        <begin position="654"/>
        <end position="680"/>
    </location>
</feature>
<feature type="coiled-coil region" evidence="1">
    <location>
        <begin position="611"/>
        <end position="673"/>
    </location>
</feature>
<feature type="compositionally biased region" description="Acidic residues" evidence="2">
    <location>
        <begin position="505"/>
        <end position="527"/>
    </location>
</feature>
<feature type="compositionally biased region" description="Acidic residues" evidence="2">
    <location>
        <begin position="540"/>
        <end position="559"/>
    </location>
</feature>
<feature type="compositionally biased region" description="Acidic residues" evidence="2">
    <location>
        <begin position="573"/>
        <end position="582"/>
    </location>
</feature>
<feature type="compositionally biased region" description="Basic and acidic residues" evidence="2">
    <location>
        <begin position="602"/>
        <end position="626"/>
    </location>
</feature>
<feature type="compositionally biased region" description="Basic and acidic residues" evidence="2">
    <location>
        <begin position="654"/>
        <end position="664"/>
    </location>
</feature>
<feature type="compositionally biased region" description="Basic and acidic residues" evidence="2">
    <location>
        <begin position="671"/>
        <end position="680"/>
    </location>
</feature>
<accession>A7EGB5</accession>
<comment type="function">
    <text evidence="1">Component of the NOP7 complex, which is required for maturation of the 25S and 5.8S ribosomal RNAs and formation of the 60S ribosome.</text>
</comment>
<comment type="subunit">
    <text evidence="1">Component of the NOP7 complex, composed of erb1, nop7 and ytm1. The complex is held together by erb1, which interacts with nop7 via its N-terminal domain and with ytm1 via a high-affinity interaction between the seven-bladed beta-propeller domains of the 2 proteins. The NOP7 complex associates with the 66S pre-ribosome.</text>
</comment>
<comment type="subcellular location">
    <subcellularLocation>
        <location evidence="1">Nucleus</location>
        <location evidence="1">Nucleolus</location>
    </subcellularLocation>
    <subcellularLocation>
        <location evidence="1">Nucleus</location>
        <location evidence="1">Nucleoplasm</location>
    </subcellularLocation>
</comment>
<comment type="similarity">
    <text evidence="1">Belongs to the pescadillo family.</text>
</comment>
<evidence type="ECO:0000255" key="1">
    <source>
        <dbReference type="HAMAP-Rule" id="MF_03028"/>
    </source>
</evidence>
<evidence type="ECO:0000256" key="2">
    <source>
        <dbReference type="SAM" id="MobiDB-lite"/>
    </source>
</evidence>
<protein>
    <recommendedName>
        <fullName evidence="1">Pescadillo homolog</fullName>
    </recommendedName>
    <alternativeName>
        <fullName evidence="1">Nucleolar protein 7 homolog</fullName>
    </alternativeName>
</protein>
<keyword id="KW-0175">Coiled coil</keyword>
<keyword id="KW-0539">Nucleus</keyword>
<keyword id="KW-1185">Reference proteome</keyword>
<keyword id="KW-0690">Ribosome biogenesis</keyword>
<keyword id="KW-0698">rRNA processing</keyword>
<reference key="1">
    <citation type="journal article" date="2011" name="PLoS Genet.">
        <title>Genomic analysis of the necrotrophic fungal pathogens Sclerotinia sclerotiorum and Botrytis cinerea.</title>
        <authorList>
            <person name="Amselem J."/>
            <person name="Cuomo C.A."/>
            <person name="van Kan J.A.L."/>
            <person name="Viaud M."/>
            <person name="Benito E.P."/>
            <person name="Couloux A."/>
            <person name="Coutinho P.M."/>
            <person name="de Vries R.P."/>
            <person name="Dyer P.S."/>
            <person name="Fillinger S."/>
            <person name="Fournier E."/>
            <person name="Gout L."/>
            <person name="Hahn M."/>
            <person name="Kohn L."/>
            <person name="Lapalu N."/>
            <person name="Plummer K.M."/>
            <person name="Pradier J.-M."/>
            <person name="Quevillon E."/>
            <person name="Sharon A."/>
            <person name="Simon A."/>
            <person name="ten Have A."/>
            <person name="Tudzynski B."/>
            <person name="Tudzynski P."/>
            <person name="Wincker P."/>
            <person name="Andrew M."/>
            <person name="Anthouard V."/>
            <person name="Beever R.E."/>
            <person name="Beffa R."/>
            <person name="Benoit I."/>
            <person name="Bouzid O."/>
            <person name="Brault B."/>
            <person name="Chen Z."/>
            <person name="Choquer M."/>
            <person name="Collemare J."/>
            <person name="Cotton P."/>
            <person name="Danchin E.G."/>
            <person name="Da Silva C."/>
            <person name="Gautier A."/>
            <person name="Giraud C."/>
            <person name="Giraud T."/>
            <person name="Gonzalez C."/>
            <person name="Grossetete S."/>
            <person name="Gueldener U."/>
            <person name="Henrissat B."/>
            <person name="Howlett B.J."/>
            <person name="Kodira C."/>
            <person name="Kretschmer M."/>
            <person name="Lappartient A."/>
            <person name="Leroch M."/>
            <person name="Levis C."/>
            <person name="Mauceli E."/>
            <person name="Neuveglise C."/>
            <person name="Oeser B."/>
            <person name="Pearson M."/>
            <person name="Poulain J."/>
            <person name="Poussereau N."/>
            <person name="Quesneville H."/>
            <person name="Rascle C."/>
            <person name="Schumacher J."/>
            <person name="Segurens B."/>
            <person name="Sexton A."/>
            <person name="Silva E."/>
            <person name="Sirven C."/>
            <person name="Soanes D.M."/>
            <person name="Talbot N.J."/>
            <person name="Templeton M."/>
            <person name="Yandava C."/>
            <person name="Yarden O."/>
            <person name="Zeng Q."/>
            <person name="Rollins J.A."/>
            <person name="Lebrun M.-H."/>
            <person name="Dickman M."/>
        </authorList>
    </citation>
    <scope>NUCLEOTIDE SEQUENCE [LARGE SCALE GENOMIC DNA]</scope>
    <source>
        <strain>ATCC 18683 / 1980 / Ss-1</strain>
    </source>
</reference>
<organism>
    <name type="scientific">Sclerotinia sclerotiorum (strain ATCC 18683 / 1980 / Ss-1)</name>
    <name type="common">White mold</name>
    <name type="synonym">Whetzelinia sclerotiorum</name>
    <dbReference type="NCBI Taxonomy" id="665079"/>
    <lineage>
        <taxon>Eukaryota</taxon>
        <taxon>Fungi</taxon>
        <taxon>Dikarya</taxon>
        <taxon>Ascomycota</taxon>
        <taxon>Pezizomycotina</taxon>
        <taxon>Leotiomycetes</taxon>
        <taxon>Helotiales</taxon>
        <taxon>Sclerotiniaceae</taxon>
        <taxon>Sclerotinia</taxon>
    </lineage>
</organism>